<gene>
    <name evidence="1" type="primary">rnhA</name>
    <name type="ordered locus">PSEEN3559</name>
</gene>
<name>RNH_PSEE4</name>
<sequence>MSDSVEIYTDGACKGNPGPGGWGVLMVFKGVEKELWGGERETTNNRMELMAAIEGLKALKRECEVVLTTDSQYVMKGINEWMVNWKKRGWKTAAKEPVKNADLWMALDEQVNRHKVTWKWVRGHIGHPGNERADQLANRGVDEVRAQR</sequence>
<keyword id="KW-0963">Cytoplasm</keyword>
<keyword id="KW-0255">Endonuclease</keyword>
<keyword id="KW-0378">Hydrolase</keyword>
<keyword id="KW-0460">Magnesium</keyword>
<keyword id="KW-0479">Metal-binding</keyword>
<keyword id="KW-0540">Nuclease</keyword>
<organism>
    <name type="scientific">Pseudomonas entomophila (strain L48)</name>
    <dbReference type="NCBI Taxonomy" id="384676"/>
    <lineage>
        <taxon>Bacteria</taxon>
        <taxon>Pseudomonadati</taxon>
        <taxon>Pseudomonadota</taxon>
        <taxon>Gammaproteobacteria</taxon>
        <taxon>Pseudomonadales</taxon>
        <taxon>Pseudomonadaceae</taxon>
        <taxon>Pseudomonas</taxon>
    </lineage>
</organism>
<reference key="1">
    <citation type="journal article" date="2006" name="Nat. Biotechnol.">
        <title>Complete genome sequence of the entomopathogenic and metabolically versatile soil bacterium Pseudomonas entomophila.</title>
        <authorList>
            <person name="Vodovar N."/>
            <person name="Vallenet D."/>
            <person name="Cruveiller S."/>
            <person name="Rouy Z."/>
            <person name="Barbe V."/>
            <person name="Acosta C."/>
            <person name="Cattolico L."/>
            <person name="Jubin C."/>
            <person name="Lajus A."/>
            <person name="Segurens B."/>
            <person name="Vacherie B."/>
            <person name="Wincker P."/>
            <person name="Weissenbach J."/>
            <person name="Lemaitre B."/>
            <person name="Medigue C."/>
            <person name="Boccard F."/>
        </authorList>
    </citation>
    <scope>NUCLEOTIDE SEQUENCE [LARGE SCALE GENOMIC DNA]</scope>
    <source>
        <strain>L48</strain>
    </source>
</reference>
<evidence type="ECO:0000255" key="1">
    <source>
        <dbReference type="HAMAP-Rule" id="MF_00042"/>
    </source>
</evidence>
<evidence type="ECO:0000255" key="2">
    <source>
        <dbReference type="PROSITE-ProRule" id="PRU00408"/>
    </source>
</evidence>
<evidence type="ECO:0000256" key="3">
    <source>
        <dbReference type="SAM" id="MobiDB-lite"/>
    </source>
</evidence>
<proteinExistence type="inferred from homology"/>
<accession>Q1I7T4</accession>
<comment type="function">
    <text evidence="1">Endonuclease that specifically degrades the RNA of RNA-DNA hybrids.</text>
</comment>
<comment type="catalytic activity">
    <reaction evidence="1">
        <text>Endonucleolytic cleavage to 5'-phosphomonoester.</text>
        <dbReference type="EC" id="3.1.26.4"/>
    </reaction>
</comment>
<comment type="cofactor">
    <cofactor evidence="1">
        <name>Mg(2+)</name>
        <dbReference type="ChEBI" id="CHEBI:18420"/>
    </cofactor>
    <text evidence="1">Binds 1 Mg(2+) ion per subunit. May bind a second metal ion at a regulatory site, or after substrate binding.</text>
</comment>
<comment type="subunit">
    <text evidence="1">Monomer.</text>
</comment>
<comment type="subcellular location">
    <subcellularLocation>
        <location evidence="1">Cytoplasm</location>
    </subcellularLocation>
</comment>
<comment type="similarity">
    <text evidence="1">Belongs to the RNase H family.</text>
</comment>
<feature type="chain" id="PRO_1000074654" description="Ribonuclease H">
    <location>
        <begin position="1"/>
        <end position="148"/>
    </location>
</feature>
<feature type="domain" description="RNase H type-1" evidence="2">
    <location>
        <begin position="1"/>
        <end position="142"/>
    </location>
</feature>
<feature type="region of interest" description="Disordered" evidence="3">
    <location>
        <begin position="129"/>
        <end position="148"/>
    </location>
</feature>
<feature type="binding site" evidence="1">
    <location>
        <position position="10"/>
    </location>
    <ligand>
        <name>Mg(2+)</name>
        <dbReference type="ChEBI" id="CHEBI:18420"/>
        <label>1</label>
    </ligand>
</feature>
<feature type="binding site" evidence="1">
    <location>
        <position position="10"/>
    </location>
    <ligand>
        <name>Mg(2+)</name>
        <dbReference type="ChEBI" id="CHEBI:18420"/>
        <label>2</label>
    </ligand>
</feature>
<feature type="binding site" evidence="1">
    <location>
        <position position="48"/>
    </location>
    <ligand>
        <name>Mg(2+)</name>
        <dbReference type="ChEBI" id="CHEBI:18420"/>
        <label>1</label>
    </ligand>
</feature>
<feature type="binding site" evidence="1">
    <location>
        <position position="70"/>
    </location>
    <ligand>
        <name>Mg(2+)</name>
        <dbReference type="ChEBI" id="CHEBI:18420"/>
        <label>1</label>
    </ligand>
</feature>
<feature type="binding site" evidence="1">
    <location>
        <position position="134"/>
    </location>
    <ligand>
        <name>Mg(2+)</name>
        <dbReference type="ChEBI" id="CHEBI:18420"/>
        <label>2</label>
    </ligand>
</feature>
<dbReference type="EC" id="3.1.26.4" evidence="1"/>
<dbReference type="EMBL" id="CT573326">
    <property type="protein sequence ID" value="CAK16294.1"/>
    <property type="molecule type" value="Genomic_DNA"/>
</dbReference>
<dbReference type="RefSeq" id="WP_011534678.1">
    <property type="nucleotide sequence ID" value="NC_008027.1"/>
</dbReference>
<dbReference type="SMR" id="Q1I7T4"/>
<dbReference type="STRING" id="384676.PSEEN3559"/>
<dbReference type="GeneID" id="32806630"/>
<dbReference type="KEGG" id="pen:PSEEN3559"/>
<dbReference type="eggNOG" id="COG0328">
    <property type="taxonomic scope" value="Bacteria"/>
</dbReference>
<dbReference type="HOGENOM" id="CLU_030894_6_0_6"/>
<dbReference type="OrthoDB" id="7845843at2"/>
<dbReference type="Proteomes" id="UP000000658">
    <property type="component" value="Chromosome"/>
</dbReference>
<dbReference type="GO" id="GO:0005737">
    <property type="term" value="C:cytoplasm"/>
    <property type="evidence" value="ECO:0007669"/>
    <property type="project" value="UniProtKB-SubCell"/>
</dbReference>
<dbReference type="GO" id="GO:0000287">
    <property type="term" value="F:magnesium ion binding"/>
    <property type="evidence" value="ECO:0007669"/>
    <property type="project" value="UniProtKB-UniRule"/>
</dbReference>
<dbReference type="GO" id="GO:0003676">
    <property type="term" value="F:nucleic acid binding"/>
    <property type="evidence" value="ECO:0007669"/>
    <property type="project" value="InterPro"/>
</dbReference>
<dbReference type="GO" id="GO:0004523">
    <property type="term" value="F:RNA-DNA hybrid ribonuclease activity"/>
    <property type="evidence" value="ECO:0007669"/>
    <property type="project" value="UniProtKB-UniRule"/>
</dbReference>
<dbReference type="GO" id="GO:0043137">
    <property type="term" value="P:DNA replication, removal of RNA primer"/>
    <property type="evidence" value="ECO:0007669"/>
    <property type="project" value="TreeGrafter"/>
</dbReference>
<dbReference type="CDD" id="cd09278">
    <property type="entry name" value="RNase_HI_prokaryote_like"/>
    <property type="match status" value="1"/>
</dbReference>
<dbReference type="FunFam" id="3.30.420.10:FF:000089">
    <property type="entry name" value="Ribonuclease H"/>
    <property type="match status" value="1"/>
</dbReference>
<dbReference type="Gene3D" id="3.30.420.10">
    <property type="entry name" value="Ribonuclease H-like superfamily/Ribonuclease H"/>
    <property type="match status" value="1"/>
</dbReference>
<dbReference type="HAMAP" id="MF_00042">
    <property type="entry name" value="RNase_H"/>
    <property type="match status" value="1"/>
</dbReference>
<dbReference type="InterPro" id="IPR050092">
    <property type="entry name" value="RNase_H"/>
</dbReference>
<dbReference type="InterPro" id="IPR012337">
    <property type="entry name" value="RNaseH-like_sf"/>
</dbReference>
<dbReference type="InterPro" id="IPR002156">
    <property type="entry name" value="RNaseH_domain"/>
</dbReference>
<dbReference type="InterPro" id="IPR036397">
    <property type="entry name" value="RNaseH_sf"/>
</dbReference>
<dbReference type="InterPro" id="IPR022892">
    <property type="entry name" value="RNaseHI"/>
</dbReference>
<dbReference type="NCBIfam" id="NF001236">
    <property type="entry name" value="PRK00203.1"/>
    <property type="match status" value="1"/>
</dbReference>
<dbReference type="PANTHER" id="PTHR10642">
    <property type="entry name" value="RIBONUCLEASE H1"/>
    <property type="match status" value="1"/>
</dbReference>
<dbReference type="PANTHER" id="PTHR10642:SF26">
    <property type="entry name" value="RIBONUCLEASE H1"/>
    <property type="match status" value="1"/>
</dbReference>
<dbReference type="Pfam" id="PF00075">
    <property type="entry name" value="RNase_H"/>
    <property type="match status" value="1"/>
</dbReference>
<dbReference type="SUPFAM" id="SSF53098">
    <property type="entry name" value="Ribonuclease H-like"/>
    <property type="match status" value="1"/>
</dbReference>
<dbReference type="PROSITE" id="PS50879">
    <property type="entry name" value="RNASE_H_1"/>
    <property type="match status" value="1"/>
</dbReference>
<protein>
    <recommendedName>
        <fullName evidence="1">Ribonuclease H</fullName>
        <shortName evidence="1">RNase H</shortName>
        <ecNumber evidence="1">3.1.26.4</ecNumber>
    </recommendedName>
</protein>